<name>LEUC_ENT38</name>
<reference key="1">
    <citation type="journal article" date="2010" name="PLoS Genet.">
        <title>Genome sequence of the plant growth promoting endophytic bacterium Enterobacter sp. 638.</title>
        <authorList>
            <person name="Taghavi S."/>
            <person name="van der Lelie D."/>
            <person name="Hoffman A."/>
            <person name="Zhang Y.B."/>
            <person name="Walla M.D."/>
            <person name="Vangronsveld J."/>
            <person name="Newman L."/>
            <person name="Monchy S."/>
        </authorList>
    </citation>
    <scope>NUCLEOTIDE SEQUENCE [LARGE SCALE GENOMIC DNA]</scope>
    <source>
        <strain>638</strain>
    </source>
</reference>
<evidence type="ECO:0000255" key="1">
    <source>
        <dbReference type="HAMAP-Rule" id="MF_01026"/>
    </source>
</evidence>
<gene>
    <name evidence="1" type="primary">leuC</name>
    <name type="ordered locus">Ent638_0620</name>
</gene>
<protein>
    <recommendedName>
        <fullName evidence="1">3-isopropylmalate dehydratase large subunit</fullName>
        <ecNumber evidence="1">4.2.1.33</ecNumber>
    </recommendedName>
    <alternativeName>
        <fullName evidence="1">Alpha-IPM isomerase</fullName>
        <shortName evidence="1">IPMI</shortName>
    </alternativeName>
    <alternativeName>
        <fullName evidence="1">Isopropylmalate isomerase</fullName>
    </alternativeName>
</protein>
<accession>A4W6H7</accession>
<sequence length="466" mass="49814">MARTLYEKLFDAHVVYEASNETPLLYIDRHLVHEVTSPQAFDGLRAHNRQVRQPGKTFATMDHNVSTQTKDINASGEMARIQMQELIKNCNAFGVELYDLNHPFQGIVHVMGPEQGITLPGMTIVCGDSHTATHGAFGALAFGIGTSEVEHVLATQTLKQGRAKTMKIEVKGHAAPGITAKDIVLAIIGKTGSAGGTGHVVEFCGDAIRALSMEGRMTLCNMAIEMGAKAGLVAPDDITFNYVKGRLHAPKGNDFDDAVEYWKTLQTDEGATFDTVVTLQAEEIAPQVTWGTNPGQVISVNDNVPDPASFADPVERASAEKALAYMGLKPGIPLTEVAIDKVFIGSCTNSRIEDLRAAAEIAKGRKVAPGVQALVVPGSGPVKAQAEAEGLDKIFIEAGFEWRLPGCSMCLAMNNDRLNPGERCASTSNRNFEGRQGRGGRTHLVSPAMAAAAAVTGHFADIRVLK</sequence>
<dbReference type="EC" id="4.2.1.33" evidence="1"/>
<dbReference type="EMBL" id="CP000653">
    <property type="protein sequence ID" value="ABP59307.1"/>
    <property type="molecule type" value="Genomic_DNA"/>
</dbReference>
<dbReference type="RefSeq" id="WP_012016029.1">
    <property type="nucleotide sequence ID" value="NC_009436.1"/>
</dbReference>
<dbReference type="SMR" id="A4W6H7"/>
<dbReference type="STRING" id="399742.Ent638_0620"/>
<dbReference type="KEGG" id="ent:Ent638_0620"/>
<dbReference type="eggNOG" id="COG0065">
    <property type="taxonomic scope" value="Bacteria"/>
</dbReference>
<dbReference type="HOGENOM" id="CLU_006714_3_4_6"/>
<dbReference type="OrthoDB" id="9802769at2"/>
<dbReference type="UniPathway" id="UPA00048">
    <property type="reaction ID" value="UER00071"/>
</dbReference>
<dbReference type="Proteomes" id="UP000000230">
    <property type="component" value="Chromosome"/>
</dbReference>
<dbReference type="GO" id="GO:0003861">
    <property type="term" value="F:3-isopropylmalate dehydratase activity"/>
    <property type="evidence" value="ECO:0007669"/>
    <property type="project" value="UniProtKB-UniRule"/>
</dbReference>
<dbReference type="GO" id="GO:0051539">
    <property type="term" value="F:4 iron, 4 sulfur cluster binding"/>
    <property type="evidence" value="ECO:0007669"/>
    <property type="project" value="UniProtKB-KW"/>
</dbReference>
<dbReference type="GO" id="GO:0046872">
    <property type="term" value="F:metal ion binding"/>
    <property type="evidence" value="ECO:0007669"/>
    <property type="project" value="UniProtKB-KW"/>
</dbReference>
<dbReference type="GO" id="GO:0009098">
    <property type="term" value="P:L-leucine biosynthetic process"/>
    <property type="evidence" value="ECO:0007669"/>
    <property type="project" value="UniProtKB-UniRule"/>
</dbReference>
<dbReference type="CDD" id="cd01583">
    <property type="entry name" value="IPMI"/>
    <property type="match status" value="1"/>
</dbReference>
<dbReference type="FunFam" id="3.30.499.10:FF:000006">
    <property type="entry name" value="3-isopropylmalate dehydratase large subunit"/>
    <property type="match status" value="1"/>
</dbReference>
<dbReference type="FunFam" id="3.30.499.10:FF:000007">
    <property type="entry name" value="3-isopropylmalate dehydratase large subunit"/>
    <property type="match status" value="1"/>
</dbReference>
<dbReference type="Gene3D" id="3.30.499.10">
    <property type="entry name" value="Aconitase, domain 3"/>
    <property type="match status" value="2"/>
</dbReference>
<dbReference type="HAMAP" id="MF_01026">
    <property type="entry name" value="LeuC_type1"/>
    <property type="match status" value="1"/>
</dbReference>
<dbReference type="InterPro" id="IPR004430">
    <property type="entry name" value="3-IsopropMal_deHydase_lsu"/>
</dbReference>
<dbReference type="InterPro" id="IPR015931">
    <property type="entry name" value="Acnase/IPM_dHydase_lsu_aba_1/3"/>
</dbReference>
<dbReference type="InterPro" id="IPR001030">
    <property type="entry name" value="Acoase/IPM_deHydtase_lsu_aba"/>
</dbReference>
<dbReference type="InterPro" id="IPR018136">
    <property type="entry name" value="Aconitase_4Fe-4S_BS"/>
</dbReference>
<dbReference type="InterPro" id="IPR036008">
    <property type="entry name" value="Aconitase_4Fe-4S_dom"/>
</dbReference>
<dbReference type="InterPro" id="IPR050067">
    <property type="entry name" value="IPM_dehydratase_rel_enz"/>
</dbReference>
<dbReference type="InterPro" id="IPR033941">
    <property type="entry name" value="IPMI_cat"/>
</dbReference>
<dbReference type="NCBIfam" id="TIGR00170">
    <property type="entry name" value="leuC"/>
    <property type="match status" value="1"/>
</dbReference>
<dbReference type="NCBIfam" id="NF004016">
    <property type="entry name" value="PRK05478.1"/>
    <property type="match status" value="1"/>
</dbReference>
<dbReference type="NCBIfam" id="NF009116">
    <property type="entry name" value="PRK12466.1"/>
    <property type="match status" value="1"/>
</dbReference>
<dbReference type="PANTHER" id="PTHR43822:SF9">
    <property type="entry name" value="3-ISOPROPYLMALATE DEHYDRATASE"/>
    <property type="match status" value="1"/>
</dbReference>
<dbReference type="PANTHER" id="PTHR43822">
    <property type="entry name" value="HOMOACONITASE, MITOCHONDRIAL-RELATED"/>
    <property type="match status" value="1"/>
</dbReference>
<dbReference type="Pfam" id="PF00330">
    <property type="entry name" value="Aconitase"/>
    <property type="match status" value="1"/>
</dbReference>
<dbReference type="PRINTS" id="PR00415">
    <property type="entry name" value="ACONITASE"/>
</dbReference>
<dbReference type="SUPFAM" id="SSF53732">
    <property type="entry name" value="Aconitase iron-sulfur domain"/>
    <property type="match status" value="1"/>
</dbReference>
<dbReference type="PROSITE" id="PS00450">
    <property type="entry name" value="ACONITASE_1"/>
    <property type="match status" value="1"/>
</dbReference>
<dbReference type="PROSITE" id="PS01244">
    <property type="entry name" value="ACONITASE_2"/>
    <property type="match status" value="1"/>
</dbReference>
<keyword id="KW-0004">4Fe-4S</keyword>
<keyword id="KW-0028">Amino-acid biosynthesis</keyword>
<keyword id="KW-0100">Branched-chain amino acid biosynthesis</keyword>
<keyword id="KW-0408">Iron</keyword>
<keyword id="KW-0411">Iron-sulfur</keyword>
<keyword id="KW-0432">Leucine biosynthesis</keyword>
<keyword id="KW-0456">Lyase</keyword>
<keyword id="KW-0479">Metal-binding</keyword>
<comment type="function">
    <text evidence="1">Catalyzes the isomerization between 2-isopropylmalate and 3-isopropylmalate, via the formation of 2-isopropylmaleate.</text>
</comment>
<comment type="catalytic activity">
    <reaction evidence="1">
        <text>(2R,3S)-3-isopropylmalate = (2S)-2-isopropylmalate</text>
        <dbReference type="Rhea" id="RHEA:32287"/>
        <dbReference type="ChEBI" id="CHEBI:1178"/>
        <dbReference type="ChEBI" id="CHEBI:35121"/>
        <dbReference type="EC" id="4.2.1.33"/>
    </reaction>
</comment>
<comment type="cofactor">
    <cofactor evidence="1">
        <name>[4Fe-4S] cluster</name>
        <dbReference type="ChEBI" id="CHEBI:49883"/>
    </cofactor>
    <text evidence="1">Binds 1 [4Fe-4S] cluster per subunit.</text>
</comment>
<comment type="pathway">
    <text evidence="1">Amino-acid biosynthesis; L-leucine biosynthesis; L-leucine from 3-methyl-2-oxobutanoate: step 2/4.</text>
</comment>
<comment type="subunit">
    <text evidence="1">Heterodimer of LeuC and LeuD.</text>
</comment>
<comment type="similarity">
    <text evidence="1">Belongs to the aconitase/IPM isomerase family. LeuC type 1 subfamily.</text>
</comment>
<feature type="chain" id="PRO_1000063553" description="3-isopropylmalate dehydratase large subunit">
    <location>
        <begin position="1"/>
        <end position="466"/>
    </location>
</feature>
<feature type="binding site" evidence="1">
    <location>
        <position position="347"/>
    </location>
    <ligand>
        <name>[4Fe-4S] cluster</name>
        <dbReference type="ChEBI" id="CHEBI:49883"/>
    </ligand>
</feature>
<feature type="binding site" evidence="1">
    <location>
        <position position="407"/>
    </location>
    <ligand>
        <name>[4Fe-4S] cluster</name>
        <dbReference type="ChEBI" id="CHEBI:49883"/>
    </ligand>
</feature>
<feature type="binding site" evidence="1">
    <location>
        <position position="410"/>
    </location>
    <ligand>
        <name>[4Fe-4S] cluster</name>
        <dbReference type="ChEBI" id="CHEBI:49883"/>
    </ligand>
</feature>
<organism>
    <name type="scientific">Enterobacter sp. (strain 638)</name>
    <dbReference type="NCBI Taxonomy" id="399742"/>
    <lineage>
        <taxon>Bacteria</taxon>
        <taxon>Pseudomonadati</taxon>
        <taxon>Pseudomonadota</taxon>
        <taxon>Gammaproteobacteria</taxon>
        <taxon>Enterobacterales</taxon>
        <taxon>Enterobacteriaceae</taxon>
        <taxon>Enterobacter</taxon>
    </lineage>
</organism>
<proteinExistence type="inferred from homology"/>